<accession>Q92154</accession>
<name>SMP_COTJA</name>
<evidence type="ECO:0000250" key="1"/>
<evidence type="ECO:0000255" key="2"/>
<evidence type="ECO:0000255" key="3">
    <source>
        <dbReference type="PROSITE-ProRule" id="PRU00114"/>
    </source>
</evidence>
<evidence type="ECO:0000256" key="4">
    <source>
        <dbReference type="SAM" id="MobiDB-lite"/>
    </source>
</evidence>
<evidence type="ECO:0000269" key="5">
    <source>
    </source>
</evidence>
<evidence type="ECO:0000305" key="6"/>
<protein>
    <recommendedName>
        <fullName>Schwann cell myelin protein</fullName>
    </recommendedName>
    <alternativeName>
        <fullName>Siglec-4b</fullName>
    </alternativeName>
</protein>
<dbReference type="EMBL" id="S83711">
    <property type="protein sequence ID" value="AAB21466.1"/>
    <property type="molecule type" value="mRNA"/>
</dbReference>
<dbReference type="PIR" id="JH0593">
    <property type="entry name" value="JH0593"/>
</dbReference>
<dbReference type="SMR" id="Q92154"/>
<dbReference type="GlyCosmos" id="Q92154">
    <property type="glycosylation" value="5 sites, No reported glycans"/>
</dbReference>
<dbReference type="Proteomes" id="UP000694412">
    <property type="component" value="Unplaced"/>
</dbReference>
<dbReference type="GO" id="GO:0005886">
    <property type="term" value="C:plasma membrane"/>
    <property type="evidence" value="ECO:0007669"/>
    <property type="project" value="TreeGrafter"/>
</dbReference>
<dbReference type="GO" id="GO:0030246">
    <property type="term" value="F:carbohydrate binding"/>
    <property type="evidence" value="ECO:0007669"/>
    <property type="project" value="UniProtKB-KW"/>
</dbReference>
<dbReference type="GO" id="GO:0033691">
    <property type="term" value="F:sialic acid binding"/>
    <property type="evidence" value="ECO:0007669"/>
    <property type="project" value="TreeGrafter"/>
</dbReference>
<dbReference type="GO" id="GO:0007155">
    <property type="term" value="P:cell adhesion"/>
    <property type="evidence" value="ECO:0007669"/>
    <property type="project" value="UniProtKB-KW"/>
</dbReference>
<dbReference type="Gene3D" id="2.60.40.10">
    <property type="entry name" value="Immunoglobulins"/>
    <property type="match status" value="4"/>
</dbReference>
<dbReference type="InterPro" id="IPR007110">
    <property type="entry name" value="Ig-like_dom"/>
</dbReference>
<dbReference type="InterPro" id="IPR036179">
    <property type="entry name" value="Ig-like_dom_sf"/>
</dbReference>
<dbReference type="InterPro" id="IPR013783">
    <property type="entry name" value="Ig-like_fold"/>
</dbReference>
<dbReference type="InterPro" id="IPR003599">
    <property type="entry name" value="Ig_sub"/>
</dbReference>
<dbReference type="InterPro" id="IPR003598">
    <property type="entry name" value="Ig_sub2"/>
</dbReference>
<dbReference type="InterPro" id="IPR051036">
    <property type="entry name" value="SIGLEC"/>
</dbReference>
<dbReference type="PANTHER" id="PTHR12035:SF107">
    <property type="entry name" value="MYELIN-ASSOCIATED GLYCOPROTEIN"/>
    <property type="match status" value="1"/>
</dbReference>
<dbReference type="PANTHER" id="PTHR12035">
    <property type="entry name" value="SIALIC ACID BINDING IMMUNOGLOBULIN-LIKE LECTIN"/>
    <property type="match status" value="1"/>
</dbReference>
<dbReference type="Pfam" id="PF13927">
    <property type="entry name" value="Ig_3"/>
    <property type="match status" value="2"/>
</dbReference>
<dbReference type="SMART" id="SM00409">
    <property type="entry name" value="IG"/>
    <property type="match status" value="3"/>
</dbReference>
<dbReference type="SMART" id="SM00408">
    <property type="entry name" value="IGc2"/>
    <property type="match status" value="2"/>
</dbReference>
<dbReference type="SUPFAM" id="SSF48726">
    <property type="entry name" value="Immunoglobulin"/>
    <property type="match status" value="4"/>
</dbReference>
<dbReference type="PROSITE" id="PS50835">
    <property type="entry name" value="IG_LIKE"/>
    <property type="match status" value="2"/>
</dbReference>
<comment type="subcellular location">
    <subcellularLocation>
        <location>Membrane</location>
        <topology>Single-pass type I membrane protein</topology>
    </subcellularLocation>
</comment>
<comment type="tissue specificity">
    <text>Exclusively expressed by myelinating and nonmyelinating Schwann cells and oligodendrocytes.</text>
</comment>
<comment type="developmental stage">
    <text>First synthesized at embryonic day 5, it remains expressed by cultured Schwann cells.</text>
</comment>
<comment type="similarity">
    <text evidence="6">Belongs to the immunoglobulin superfamily. SIGLEC (sialic acid binding Ig-like lectin) family.</text>
</comment>
<organism>
    <name type="scientific">Coturnix japonica</name>
    <name type="common">Japanese quail</name>
    <name type="synonym">Coturnix coturnix japonica</name>
    <dbReference type="NCBI Taxonomy" id="93934"/>
    <lineage>
        <taxon>Eukaryota</taxon>
        <taxon>Metazoa</taxon>
        <taxon>Chordata</taxon>
        <taxon>Craniata</taxon>
        <taxon>Vertebrata</taxon>
        <taxon>Euteleostomi</taxon>
        <taxon>Archelosauria</taxon>
        <taxon>Archosauria</taxon>
        <taxon>Dinosauria</taxon>
        <taxon>Saurischia</taxon>
        <taxon>Theropoda</taxon>
        <taxon>Coelurosauria</taxon>
        <taxon>Aves</taxon>
        <taxon>Neognathae</taxon>
        <taxon>Galloanserae</taxon>
        <taxon>Galliformes</taxon>
        <taxon>Phasianidae</taxon>
        <taxon>Perdicinae</taxon>
        <taxon>Coturnix</taxon>
    </lineage>
</organism>
<feature type="signal peptide" evidence="5">
    <location>
        <begin position="1"/>
        <end position="17"/>
    </location>
</feature>
<feature type="chain" id="PRO_0000014967" description="Schwann cell myelin protein">
    <location>
        <begin position="18"/>
        <end position="620"/>
    </location>
</feature>
<feature type="topological domain" description="Extracellular" evidence="2">
    <location>
        <begin position="18"/>
        <end position="516"/>
    </location>
</feature>
<feature type="transmembrane region" description="Helical" evidence="2">
    <location>
        <begin position="517"/>
        <end position="536"/>
    </location>
</feature>
<feature type="topological domain" description="Cytoplasmic" evidence="2">
    <location>
        <begin position="537"/>
        <end position="620"/>
    </location>
</feature>
<feature type="domain" description="Ig-like V-type">
    <location>
        <begin position="28"/>
        <end position="106"/>
    </location>
</feature>
<feature type="domain" description="Ig-like C2-type 1">
    <location>
        <begin position="151"/>
        <end position="233"/>
    </location>
</feature>
<feature type="domain" description="Ig-like C2-type 2">
    <location>
        <begin position="239"/>
        <end position="322"/>
    </location>
</feature>
<feature type="domain" description="Ig-like C2-type 3">
    <location>
        <begin position="325"/>
        <end position="407"/>
    </location>
</feature>
<feature type="domain" description="Ig-like C2-type 4">
    <location>
        <begin position="414"/>
        <end position="495"/>
    </location>
</feature>
<feature type="region of interest" description="Disordered" evidence="4">
    <location>
        <begin position="539"/>
        <end position="562"/>
    </location>
</feature>
<feature type="region of interest" description="Disordered" evidence="4">
    <location>
        <begin position="583"/>
        <end position="620"/>
    </location>
</feature>
<feature type="binding site" evidence="1">
    <location>
        <position position="117"/>
    </location>
    <ligand>
        <name>N-acetylneuraminate</name>
        <dbReference type="ChEBI" id="CHEBI:35418"/>
    </ligand>
</feature>
<feature type="glycosylation site" description="N-linked (GlcNAc...) asparagine" evidence="2">
    <location>
        <position position="222"/>
    </location>
</feature>
<feature type="glycosylation site" description="N-linked (GlcNAc...) asparagine" evidence="2">
    <location>
        <position position="314"/>
    </location>
</feature>
<feature type="glycosylation site" description="N-linked (GlcNAc...) asparagine" evidence="2">
    <location>
        <position position="331"/>
    </location>
</feature>
<feature type="glycosylation site" description="N-linked (GlcNAc...) asparagine" evidence="2">
    <location>
        <position position="405"/>
    </location>
</feature>
<feature type="glycosylation site" description="N-linked (GlcNAc...) asparagine" evidence="2">
    <location>
        <position position="449"/>
    </location>
</feature>
<feature type="disulfide bond" evidence="3">
    <location>
        <begin position="35"/>
        <end position="164"/>
    </location>
</feature>
<feature type="disulfide bond" evidence="3">
    <location>
        <begin position="40"/>
        <end position="99"/>
    </location>
</feature>
<feature type="disulfide bond" evidence="3">
    <location>
        <begin position="158"/>
        <end position="216"/>
    </location>
</feature>
<feature type="disulfide bond" evidence="3">
    <location>
        <begin position="260"/>
        <end position="304"/>
    </location>
</feature>
<feature type="disulfide bond" evidence="3">
    <location>
        <begin position="346"/>
        <end position="391"/>
    </location>
</feature>
<feature type="disulfide bond" evidence="3">
    <location>
        <begin position="420"/>
        <end position="429"/>
    </location>
</feature>
<feature type="disulfide bond" evidence="3">
    <location>
        <begin position="431"/>
        <end position="488"/>
    </location>
</feature>
<keyword id="KW-0130">Cell adhesion</keyword>
<keyword id="KW-0903">Direct protein sequencing</keyword>
<keyword id="KW-1015">Disulfide bond</keyword>
<keyword id="KW-0325">Glycoprotein</keyword>
<keyword id="KW-0393">Immunoglobulin domain</keyword>
<keyword id="KW-0430">Lectin</keyword>
<keyword id="KW-0472">Membrane</keyword>
<keyword id="KW-1185">Reference proteome</keyword>
<keyword id="KW-0677">Repeat</keyword>
<keyword id="KW-0732">Signal</keyword>
<keyword id="KW-0812">Transmembrane</keyword>
<keyword id="KW-1133">Transmembrane helix</keyword>
<reference key="1">
    <citation type="journal article" date="1992" name="Neuron">
        <title>Molecular characterization of the Schwann cell myelin protein, SMP: structural similarities within the immunoglobulin superfamily.</title>
        <authorList>
            <person name="Dulac C."/>
            <person name="Tropak M.B."/>
            <person name="Cameron-Curry P."/>
            <person name="Rossier J."/>
            <person name="Marshak D.R."/>
            <person name="Roder J."/>
            <person name="le Douarin N.M."/>
        </authorList>
    </citation>
    <scope>NUCLEOTIDE SEQUENCE [MRNA]</scope>
    <scope>PROTEIN SEQUENCE OF 18-28; 120-132; 135-157 AND 563-571</scope>
</reference>
<proteinExistence type="evidence at protein level"/>
<gene>
    <name type="primary">SMP</name>
</gene>
<sequence length="620" mass="66943">MELLVLTVLLMGTGCISAPWAAWMPPKMAALSGTCVQLPCRFDYPEELRPASIGGLWYFGSPYPKNYPPVVARSRPSSAVHESFAGRASFLGDPTGRDCTLNIARLSEELAGKYYFRGDLGGYNQYSFSEHAELDVWAAPHLEVPHELVAGSEAEILCRVPDNCPPLRPLLTWTGTEELLDPIGKERIEDDLGSKSLLGSLRFRPRKEDLGRRVGCGVTFINSSLSFQADVGLDVQYEPQVVGLWGPTEVVEGSDVELGCEAEGRPAPLISWFRGSEVLREEPGRNLRLLLSNVGPDDGGSFSCVAENRHGRHNRSLQLRVAYAPRAPVINGSLWVVSGDPVSVTCRAESEPAAILTVLRGGKVMAAAIYEDHVTMEMRPARPEDGGTYSCVAENQHGASSTSFNISVEYPPLVLPASRCTAGGDGVRCVCMVNSIPDSSLVFELPTRNQTVSDGHRDFTAAPPGSDGSITGILTLRGPLEPRLLVLCAARNRHGTTARQLRFHHPGGLVWAKVGPVGAVVAFAIVIAVVCYLSQSRRKKGAGSPEVTPVQPMAGPGGDPDLDLRPQQVRWLRGAMERWALGVKEGSGAPQEVTPTSHPPMKPTRGPLEDPPEYAEIRVK</sequence>